<gene>
    <name evidence="1" type="primary">rpsK</name>
    <name type="ordered locus">OEOE_0619</name>
</gene>
<feature type="chain" id="PRO_0000294814" description="Small ribosomal subunit protein uS11">
    <location>
        <begin position="1"/>
        <end position="132"/>
    </location>
</feature>
<reference key="1">
    <citation type="journal article" date="2006" name="Proc. Natl. Acad. Sci. U.S.A.">
        <title>Comparative genomics of the lactic acid bacteria.</title>
        <authorList>
            <person name="Makarova K.S."/>
            <person name="Slesarev A."/>
            <person name="Wolf Y.I."/>
            <person name="Sorokin A."/>
            <person name="Mirkin B."/>
            <person name="Koonin E.V."/>
            <person name="Pavlov A."/>
            <person name="Pavlova N."/>
            <person name="Karamychev V."/>
            <person name="Polouchine N."/>
            <person name="Shakhova V."/>
            <person name="Grigoriev I."/>
            <person name="Lou Y."/>
            <person name="Rohksar D."/>
            <person name="Lucas S."/>
            <person name="Huang K."/>
            <person name="Goodstein D.M."/>
            <person name="Hawkins T."/>
            <person name="Plengvidhya V."/>
            <person name="Welker D."/>
            <person name="Hughes J."/>
            <person name="Goh Y."/>
            <person name="Benson A."/>
            <person name="Baldwin K."/>
            <person name="Lee J.-H."/>
            <person name="Diaz-Muniz I."/>
            <person name="Dosti B."/>
            <person name="Smeianov V."/>
            <person name="Wechter W."/>
            <person name="Barabote R."/>
            <person name="Lorca G."/>
            <person name="Altermann E."/>
            <person name="Barrangou R."/>
            <person name="Ganesan B."/>
            <person name="Xie Y."/>
            <person name="Rawsthorne H."/>
            <person name="Tamir D."/>
            <person name="Parker C."/>
            <person name="Breidt F."/>
            <person name="Broadbent J.R."/>
            <person name="Hutkins R."/>
            <person name="O'Sullivan D."/>
            <person name="Steele J."/>
            <person name="Unlu G."/>
            <person name="Saier M.H. Jr."/>
            <person name="Klaenhammer T."/>
            <person name="Richardson P."/>
            <person name="Kozyavkin S."/>
            <person name="Weimer B.C."/>
            <person name="Mills D.A."/>
        </authorList>
    </citation>
    <scope>NUCLEOTIDE SEQUENCE [LARGE SCALE GENOMIC DNA]</scope>
    <source>
        <strain>ATCC BAA-331 / PSU-1</strain>
    </source>
</reference>
<dbReference type="EMBL" id="CP000411">
    <property type="protein sequence ID" value="ABJ56561.1"/>
    <property type="molecule type" value="Genomic_DNA"/>
</dbReference>
<dbReference type="RefSeq" id="WP_002820374.1">
    <property type="nucleotide sequence ID" value="NC_008528.1"/>
</dbReference>
<dbReference type="SMR" id="Q04G61"/>
<dbReference type="STRING" id="203123.OEOE_0619"/>
<dbReference type="KEGG" id="ooe:OEOE_0619"/>
<dbReference type="eggNOG" id="COG0100">
    <property type="taxonomic scope" value="Bacteria"/>
</dbReference>
<dbReference type="HOGENOM" id="CLU_072439_5_0_9"/>
<dbReference type="Proteomes" id="UP000000774">
    <property type="component" value="Chromosome"/>
</dbReference>
<dbReference type="GO" id="GO:1990904">
    <property type="term" value="C:ribonucleoprotein complex"/>
    <property type="evidence" value="ECO:0007669"/>
    <property type="project" value="UniProtKB-KW"/>
</dbReference>
<dbReference type="GO" id="GO:0005840">
    <property type="term" value="C:ribosome"/>
    <property type="evidence" value="ECO:0007669"/>
    <property type="project" value="UniProtKB-KW"/>
</dbReference>
<dbReference type="GO" id="GO:0019843">
    <property type="term" value="F:rRNA binding"/>
    <property type="evidence" value="ECO:0007669"/>
    <property type="project" value="UniProtKB-UniRule"/>
</dbReference>
<dbReference type="GO" id="GO:0003735">
    <property type="term" value="F:structural constituent of ribosome"/>
    <property type="evidence" value="ECO:0007669"/>
    <property type="project" value="InterPro"/>
</dbReference>
<dbReference type="GO" id="GO:0006412">
    <property type="term" value="P:translation"/>
    <property type="evidence" value="ECO:0007669"/>
    <property type="project" value="UniProtKB-UniRule"/>
</dbReference>
<dbReference type="FunFam" id="3.30.420.80:FF:000001">
    <property type="entry name" value="30S ribosomal protein S11"/>
    <property type="match status" value="1"/>
</dbReference>
<dbReference type="Gene3D" id="3.30.420.80">
    <property type="entry name" value="Ribosomal protein S11"/>
    <property type="match status" value="1"/>
</dbReference>
<dbReference type="HAMAP" id="MF_01310">
    <property type="entry name" value="Ribosomal_uS11"/>
    <property type="match status" value="1"/>
</dbReference>
<dbReference type="InterPro" id="IPR001971">
    <property type="entry name" value="Ribosomal_uS11"/>
</dbReference>
<dbReference type="InterPro" id="IPR019981">
    <property type="entry name" value="Ribosomal_uS11_bac-type"/>
</dbReference>
<dbReference type="InterPro" id="IPR018102">
    <property type="entry name" value="Ribosomal_uS11_CS"/>
</dbReference>
<dbReference type="InterPro" id="IPR036967">
    <property type="entry name" value="Ribosomal_uS11_sf"/>
</dbReference>
<dbReference type="NCBIfam" id="NF003698">
    <property type="entry name" value="PRK05309.1"/>
    <property type="match status" value="1"/>
</dbReference>
<dbReference type="NCBIfam" id="TIGR03632">
    <property type="entry name" value="uS11_bact"/>
    <property type="match status" value="1"/>
</dbReference>
<dbReference type="PANTHER" id="PTHR11759">
    <property type="entry name" value="40S RIBOSOMAL PROTEIN S14/30S RIBOSOMAL PROTEIN S11"/>
    <property type="match status" value="1"/>
</dbReference>
<dbReference type="Pfam" id="PF00411">
    <property type="entry name" value="Ribosomal_S11"/>
    <property type="match status" value="1"/>
</dbReference>
<dbReference type="PIRSF" id="PIRSF002131">
    <property type="entry name" value="Ribosomal_S11"/>
    <property type="match status" value="1"/>
</dbReference>
<dbReference type="SUPFAM" id="SSF53137">
    <property type="entry name" value="Translational machinery components"/>
    <property type="match status" value="1"/>
</dbReference>
<dbReference type="PROSITE" id="PS00054">
    <property type="entry name" value="RIBOSOMAL_S11"/>
    <property type="match status" value="1"/>
</dbReference>
<name>RS11_OENOB</name>
<comment type="function">
    <text evidence="1">Located on the platform of the 30S subunit, it bridges several disparate RNA helices of the 16S rRNA. Forms part of the Shine-Dalgarno cleft in the 70S ribosome.</text>
</comment>
<comment type="subunit">
    <text evidence="1">Part of the 30S ribosomal subunit. Interacts with proteins S7 and S18. Binds to IF-3.</text>
</comment>
<comment type="similarity">
    <text evidence="1">Belongs to the universal ribosomal protein uS11 family.</text>
</comment>
<accession>Q04G61</accession>
<proteinExistence type="inferred from homology"/>
<organism>
    <name type="scientific">Oenococcus oeni (strain ATCC BAA-331 / PSU-1)</name>
    <dbReference type="NCBI Taxonomy" id="203123"/>
    <lineage>
        <taxon>Bacteria</taxon>
        <taxon>Bacillati</taxon>
        <taxon>Bacillota</taxon>
        <taxon>Bacilli</taxon>
        <taxon>Lactobacillales</taxon>
        <taxon>Lactobacillaceae</taxon>
        <taxon>Oenococcus</taxon>
    </lineage>
</organism>
<sequence>MASRTSRTSGHKRRAKKNIEKGVAHIHSTFNNTIVLITDEAGNAVSWSSAGSLGFKGSRKSTPFAAQLAGEAAAKAAMEQNMHSVAISVKGPGPGRESAIRAVAAAGLEITAISDVTPVPHNGSRPPKQRRA</sequence>
<protein>
    <recommendedName>
        <fullName evidence="1">Small ribosomal subunit protein uS11</fullName>
    </recommendedName>
    <alternativeName>
        <fullName evidence="2">30S ribosomal protein S11</fullName>
    </alternativeName>
</protein>
<keyword id="KW-1185">Reference proteome</keyword>
<keyword id="KW-0687">Ribonucleoprotein</keyword>
<keyword id="KW-0689">Ribosomal protein</keyword>
<keyword id="KW-0694">RNA-binding</keyword>
<keyword id="KW-0699">rRNA-binding</keyword>
<evidence type="ECO:0000255" key="1">
    <source>
        <dbReference type="HAMAP-Rule" id="MF_01310"/>
    </source>
</evidence>
<evidence type="ECO:0000305" key="2"/>